<reference key="1">
    <citation type="journal article" date="1999" name="J. Mol. Evol.">
        <title>The plastid genome of the cryptophyte alga, Guillardia theta: complete sequence and conserved synteny groups confirm its common ancestry with red algae.</title>
        <authorList>
            <person name="Douglas S.E."/>
            <person name="Penny S.L."/>
        </authorList>
    </citation>
    <scope>NUCLEOTIDE SEQUENCE [LARGE SCALE GENOMIC DNA]</scope>
</reference>
<comment type="subcellular location">
    <subcellularLocation>
        <location>Plastid</location>
        <location>Chloroplast</location>
    </subcellularLocation>
</comment>
<comment type="similarity">
    <text evidence="2">Belongs to the bacterial ribosomal protein bL32 family.</text>
</comment>
<accession>O78434</accession>
<gene>
    <name type="primary">rpl32</name>
</gene>
<keyword id="KW-0150">Chloroplast</keyword>
<keyword id="KW-0934">Plastid</keyword>
<keyword id="KW-0687">Ribonucleoprotein</keyword>
<keyword id="KW-0689">Ribosomal protein</keyword>
<protein>
    <recommendedName>
        <fullName evidence="2">Large ribosomal subunit protein bL32c</fullName>
    </recommendedName>
    <alternativeName>
        <fullName>50S ribosomal protein L32, chloroplastic</fullName>
    </alternativeName>
</protein>
<name>RK32_GUITH</name>
<proteinExistence type="inferred from homology"/>
<organism>
    <name type="scientific">Guillardia theta</name>
    <name type="common">Cryptophyte</name>
    <name type="synonym">Cryptomonas phi</name>
    <dbReference type="NCBI Taxonomy" id="55529"/>
    <lineage>
        <taxon>Eukaryota</taxon>
        <taxon>Cryptophyceae</taxon>
        <taxon>Pyrenomonadales</taxon>
        <taxon>Geminigeraceae</taxon>
        <taxon>Guillardia</taxon>
    </lineage>
</organism>
<geneLocation type="chloroplast"/>
<sequence>MAVPKKRTSRSKTNSRFANWLNKSNLQAQRAISKAKSITNKKNTVNDETIETE</sequence>
<evidence type="ECO:0000250" key="1"/>
<evidence type="ECO:0000305" key="2"/>
<dbReference type="EMBL" id="AF041468">
    <property type="protein sequence ID" value="AAC35619.1"/>
    <property type="molecule type" value="Genomic_DNA"/>
</dbReference>
<dbReference type="RefSeq" id="NP_050685.1">
    <property type="nucleotide sequence ID" value="NC_000926.1"/>
</dbReference>
<dbReference type="SMR" id="O78434"/>
<dbReference type="GeneID" id="856975"/>
<dbReference type="HOGENOM" id="CLU_3072751_0_0_1"/>
<dbReference type="OMA" id="RKAHWKR"/>
<dbReference type="GO" id="GO:0009507">
    <property type="term" value="C:chloroplast"/>
    <property type="evidence" value="ECO:0007669"/>
    <property type="project" value="UniProtKB-SubCell"/>
</dbReference>
<dbReference type="GO" id="GO:0015934">
    <property type="term" value="C:large ribosomal subunit"/>
    <property type="evidence" value="ECO:0007669"/>
    <property type="project" value="InterPro"/>
</dbReference>
<dbReference type="GO" id="GO:0003735">
    <property type="term" value="F:structural constituent of ribosome"/>
    <property type="evidence" value="ECO:0007669"/>
    <property type="project" value="InterPro"/>
</dbReference>
<dbReference type="GO" id="GO:0006412">
    <property type="term" value="P:translation"/>
    <property type="evidence" value="ECO:0007669"/>
    <property type="project" value="UniProtKB-UniRule"/>
</dbReference>
<dbReference type="HAMAP" id="MF_00340">
    <property type="entry name" value="Ribosomal_bL32"/>
    <property type="match status" value="1"/>
</dbReference>
<dbReference type="InterPro" id="IPR002677">
    <property type="entry name" value="Ribosomal_bL32"/>
</dbReference>
<dbReference type="InterPro" id="IPR011332">
    <property type="entry name" value="Ribosomal_zn-bd"/>
</dbReference>
<dbReference type="NCBIfam" id="TIGR01031">
    <property type="entry name" value="rpmF_bact"/>
    <property type="match status" value="1"/>
</dbReference>
<dbReference type="Pfam" id="PF01783">
    <property type="entry name" value="Ribosomal_L32p"/>
    <property type="match status" value="1"/>
</dbReference>
<dbReference type="SUPFAM" id="SSF57829">
    <property type="entry name" value="Zn-binding ribosomal proteins"/>
    <property type="match status" value="1"/>
</dbReference>
<feature type="initiator methionine" description="Removed" evidence="1">
    <location>
        <position position="1"/>
    </location>
</feature>
<feature type="chain" id="PRO_0000172459" description="Large ribosomal subunit protein bL32c">
    <location>
        <begin position="2"/>
        <end position="53"/>
    </location>
</feature>